<proteinExistence type="inferred from homology"/>
<feature type="chain" id="PRO_1000018820" description="Phosphoribosylamine--glycine ligase">
    <location>
        <begin position="1"/>
        <end position="427"/>
    </location>
</feature>
<feature type="domain" description="ATP-grasp" evidence="2">
    <location>
        <begin position="109"/>
        <end position="313"/>
    </location>
</feature>
<feature type="binding site" evidence="2">
    <location>
        <begin position="136"/>
        <end position="191"/>
    </location>
    <ligand>
        <name>ATP</name>
        <dbReference type="ChEBI" id="CHEBI:30616"/>
    </ligand>
</feature>
<feature type="binding site" evidence="2">
    <location>
        <position position="271"/>
    </location>
    <ligand>
        <name>Mg(2+)</name>
        <dbReference type="ChEBI" id="CHEBI:18420"/>
        <label>1</label>
    </ligand>
</feature>
<feature type="binding site" evidence="2">
    <location>
        <position position="271"/>
    </location>
    <ligand>
        <name>Mn(2+)</name>
        <dbReference type="ChEBI" id="CHEBI:29035"/>
        <label>1</label>
    </ligand>
</feature>
<feature type="binding site" evidence="2">
    <location>
        <position position="283"/>
    </location>
    <ligand>
        <name>Mg(2+)</name>
        <dbReference type="ChEBI" id="CHEBI:18420"/>
        <label>1</label>
    </ligand>
</feature>
<feature type="binding site" evidence="2">
    <location>
        <position position="283"/>
    </location>
    <ligand>
        <name>Mg(2+)</name>
        <dbReference type="ChEBI" id="CHEBI:18420"/>
        <label>2</label>
    </ligand>
</feature>
<feature type="binding site" evidence="2">
    <location>
        <position position="283"/>
    </location>
    <ligand>
        <name>Mn(2+)</name>
        <dbReference type="ChEBI" id="CHEBI:29035"/>
        <label>1</label>
    </ligand>
</feature>
<feature type="binding site" evidence="2">
    <location>
        <position position="283"/>
    </location>
    <ligand>
        <name>Mn(2+)</name>
        <dbReference type="ChEBI" id="CHEBI:29035"/>
        <label>2</label>
    </ligand>
</feature>
<feature type="binding site" evidence="2">
    <location>
        <position position="285"/>
    </location>
    <ligand>
        <name>Mg(2+)</name>
        <dbReference type="ChEBI" id="CHEBI:18420"/>
        <label>2</label>
    </ligand>
</feature>
<feature type="binding site" evidence="2">
    <location>
        <position position="285"/>
    </location>
    <ligand>
        <name>Mn(2+)</name>
        <dbReference type="ChEBI" id="CHEBI:29035"/>
        <label>2</label>
    </ligand>
</feature>
<evidence type="ECO:0000250" key="1"/>
<evidence type="ECO:0000255" key="2">
    <source>
        <dbReference type="HAMAP-Rule" id="MF_00138"/>
    </source>
</evidence>
<keyword id="KW-0067">ATP-binding</keyword>
<keyword id="KW-0436">Ligase</keyword>
<keyword id="KW-0460">Magnesium</keyword>
<keyword id="KW-0464">Manganese</keyword>
<keyword id="KW-0479">Metal-binding</keyword>
<keyword id="KW-0547">Nucleotide-binding</keyword>
<keyword id="KW-0658">Purine biosynthesis</keyword>
<keyword id="KW-1185">Reference proteome</keyword>
<sequence length="427" mass="45465">MKILVVGGGGREHAIAAALSRTTGTEIYAAMARKNPGIARLAKEICLTPETNLDRIAAFAQKTGVTHAFIGPEAPLEAGVVDRLSAAGVACAGPTKAAARIETDKAFCRNLMAEYKIEGNPAYRVFFDPKEAIAFVRDHDGDLAVKPIGLTGGKGVRIMGEQVDRAGAIEYIREINGGVVLEERLTGEEFTLQAFVDGTHIVPMPLVQDHKRAFEGDTGPNTGGMGSYTMPDHMLPFVTKKDLTAALSIMVSVVAAMAHKGYPYKGILYGQFMNTAQGPKVIEFNARFGDPEAMNVLTLLSSDLAEVVTGITEGTLSASNVSFEKAATVCKYLVPEGYPSAPKTNSPISIGETGSAITYYANVEEKNGTLQTLSSRTLAFVGKAPTLAEAEQIAENAASSVTGEVFHRRDIGTQALLDRRIAHMKEL</sequence>
<gene>
    <name evidence="2" type="primary">purD</name>
    <name type="ordered locus">Mboo_0840</name>
</gene>
<comment type="catalytic activity">
    <reaction evidence="2">
        <text>5-phospho-beta-D-ribosylamine + glycine + ATP = N(1)-(5-phospho-beta-D-ribosyl)glycinamide + ADP + phosphate + H(+)</text>
        <dbReference type="Rhea" id="RHEA:17453"/>
        <dbReference type="ChEBI" id="CHEBI:15378"/>
        <dbReference type="ChEBI" id="CHEBI:30616"/>
        <dbReference type="ChEBI" id="CHEBI:43474"/>
        <dbReference type="ChEBI" id="CHEBI:57305"/>
        <dbReference type="ChEBI" id="CHEBI:58681"/>
        <dbReference type="ChEBI" id="CHEBI:143788"/>
        <dbReference type="ChEBI" id="CHEBI:456216"/>
        <dbReference type="EC" id="6.3.4.13"/>
    </reaction>
</comment>
<comment type="cofactor">
    <cofactor evidence="1">
        <name>Mg(2+)</name>
        <dbReference type="ChEBI" id="CHEBI:18420"/>
    </cofactor>
    <cofactor evidence="1">
        <name>Mn(2+)</name>
        <dbReference type="ChEBI" id="CHEBI:29035"/>
    </cofactor>
    <text evidence="1">Binds 2 magnesium or manganese ions per subunit.</text>
</comment>
<comment type="pathway">
    <text evidence="2">Purine metabolism; IMP biosynthesis via de novo pathway; N(1)-(5-phospho-D-ribosyl)glycinamide from 5-phospho-alpha-D-ribose 1-diphosphate: step 2/2.</text>
</comment>
<comment type="similarity">
    <text evidence="2">Belongs to the GARS family.</text>
</comment>
<reference key="1">
    <citation type="journal article" date="2015" name="Microbiology">
        <title>Genome of Methanoregula boonei 6A8 reveals adaptations to oligotrophic peatland environments.</title>
        <authorList>
            <person name="Braeuer S."/>
            <person name="Cadillo-Quiroz H."/>
            <person name="Kyrpides N."/>
            <person name="Woyke T."/>
            <person name="Goodwin L."/>
            <person name="Detter C."/>
            <person name="Podell S."/>
            <person name="Yavitt J.B."/>
            <person name="Zinder S.H."/>
        </authorList>
    </citation>
    <scope>NUCLEOTIDE SEQUENCE [LARGE SCALE GENOMIC DNA]</scope>
    <source>
        <strain>DSM 21154 / JCM 14090 / 6A8</strain>
    </source>
</reference>
<accession>A7I6J7</accession>
<dbReference type="EC" id="6.3.4.13" evidence="2"/>
<dbReference type="EMBL" id="CP000780">
    <property type="protein sequence ID" value="ABS55358.1"/>
    <property type="molecule type" value="Genomic_DNA"/>
</dbReference>
<dbReference type="RefSeq" id="WP_012106382.1">
    <property type="nucleotide sequence ID" value="NC_009712.1"/>
</dbReference>
<dbReference type="SMR" id="A7I6J7"/>
<dbReference type="STRING" id="456442.Mboo_0840"/>
<dbReference type="GeneID" id="5410029"/>
<dbReference type="KEGG" id="mbn:Mboo_0840"/>
<dbReference type="eggNOG" id="arCOG04415">
    <property type="taxonomic scope" value="Archaea"/>
</dbReference>
<dbReference type="HOGENOM" id="CLU_027420_3_0_2"/>
<dbReference type="OrthoDB" id="146558at2157"/>
<dbReference type="UniPathway" id="UPA00074">
    <property type="reaction ID" value="UER00125"/>
</dbReference>
<dbReference type="Proteomes" id="UP000002408">
    <property type="component" value="Chromosome"/>
</dbReference>
<dbReference type="GO" id="GO:0005524">
    <property type="term" value="F:ATP binding"/>
    <property type="evidence" value="ECO:0007669"/>
    <property type="project" value="UniProtKB-KW"/>
</dbReference>
<dbReference type="GO" id="GO:0046872">
    <property type="term" value="F:metal ion binding"/>
    <property type="evidence" value="ECO:0007669"/>
    <property type="project" value="UniProtKB-KW"/>
</dbReference>
<dbReference type="GO" id="GO:0004637">
    <property type="term" value="F:phosphoribosylamine-glycine ligase activity"/>
    <property type="evidence" value="ECO:0007669"/>
    <property type="project" value="UniProtKB-UniRule"/>
</dbReference>
<dbReference type="GO" id="GO:0006189">
    <property type="term" value="P:'de novo' IMP biosynthetic process"/>
    <property type="evidence" value="ECO:0007669"/>
    <property type="project" value="UniProtKB-UniRule"/>
</dbReference>
<dbReference type="GO" id="GO:0009113">
    <property type="term" value="P:purine nucleobase biosynthetic process"/>
    <property type="evidence" value="ECO:0007669"/>
    <property type="project" value="InterPro"/>
</dbReference>
<dbReference type="Gene3D" id="3.40.50.20">
    <property type="match status" value="1"/>
</dbReference>
<dbReference type="Gene3D" id="3.30.1490.20">
    <property type="entry name" value="ATP-grasp fold, A domain"/>
    <property type="match status" value="1"/>
</dbReference>
<dbReference type="Gene3D" id="3.30.470.20">
    <property type="entry name" value="ATP-grasp fold, B domain"/>
    <property type="match status" value="1"/>
</dbReference>
<dbReference type="Gene3D" id="3.90.600.10">
    <property type="entry name" value="Phosphoribosylglycinamide synthetase, C-terminal domain"/>
    <property type="match status" value="1"/>
</dbReference>
<dbReference type="HAMAP" id="MF_00138">
    <property type="entry name" value="GARS"/>
    <property type="match status" value="1"/>
</dbReference>
<dbReference type="InterPro" id="IPR011761">
    <property type="entry name" value="ATP-grasp"/>
</dbReference>
<dbReference type="InterPro" id="IPR013815">
    <property type="entry name" value="ATP_grasp_subdomain_1"/>
</dbReference>
<dbReference type="InterPro" id="IPR016185">
    <property type="entry name" value="PreATP-grasp_dom_sf"/>
</dbReference>
<dbReference type="InterPro" id="IPR020561">
    <property type="entry name" value="PRibGlycinamid_synth_ATP-grasp"/>
</dbReference>
<dbReference type="InterPro" id="IPR000115">
    <property type="entry name" value="PRibGlycinamide_synth"/>
</dbReference>
<dbReference type="InterPro" id="IPR020560">
    <property type="entry name" value="PRibGlycinamide_synth_C-dom"/>
</dbReference>
<dbReference type="InterPro" id="IPR037123">
    <property type="entry name" value="PRibGlycinamide_synth_C_sf"/>
</dbReference>
<dbReference type="InterPro" id="IPR020559">
    <property type="entry name" value="PRibGlycinamide_synth_CS"/>
</dbReference>
<dbReference type="InterPro" id="IPR020562">
    <property type="entry name" value="PRibGlycinamide_synth_N"/>
</dbReference>
<dbReference type="InterPro" id="IPR011054">
    <property type="entry name" value="Rudment_hybrid_motif"/>
</dbReference>
<dbReference type="NCBIfam" id="TIGR00877">
    <property type="entry name" value="purD"/>
    <property type="match status" value="1"/>
</dbReference>
<dbReference type="PANTHER" id="PTHR43472">
    <property type="entry name" value="PHOSPHORIBOSYLAMINE--GLYCINE LIGASE"/>
    <property type="match status" value="1"/>
</dbReference>
<dbReference type="PANTHER" id="PTHR43472:SF1">
    <property type="entry name" value="PHOSPHORIBOSYLAMINE--GLYCINE LIGASE, CHLOROPLASTIC"/>
    <property type="match status" value="1"/>
</dbReference>
<dbReference type="Pfam" id="PF01071">
    <property type="entry name" value="GARS_A"/>
    <property type="match status" value="1"/>
</dbReference>
<dbReference type="Pfam" id="PF02843">
    <property type="entry name" value="GARS_C"/>
    <property type="match status" value="1"/>
</dbReference>
<dbReference type="Pfam" id="PF02844">
    <property type="entry name" value="GARS_N"/>
    <property type="match status" value="1"/>
</dbReference>
<dbReference type="SMART" id="SM01209">
    <property type="entry name" value="GARS_A"/>
    <property type="match status" value="1"/>
</dbReference>
<dbReference type="SMART" id="SM01210">
    <property type="entry name" value="GARS_C"/>
    <property type="match status" value="1"/>
</dbReference>
<dbReference type="SUPFAM" id="SSF56059">
    <property type="entry name" value="Glutathione synthetase ATP-binding domain-like"/>
    <property type="match status" value="1"/>
</dbReference>
<dbReference type="SUPFAM" id="SSF52440">
    <property type="entry name" value="PreATP-grasp domain"/>
    <property type="match status" value="1"/>
</dbReference>
<dbReference type="SUPFAM" id="SSF51246">
    <property type="entry name" value="Rudiment single hybrid motif"/>
    <property type="match status" value="1"/>
</dbReference>
<dbReference type="PROSITE" id="PS50975">
    <property type="entry name" value="ATP_GRASP"/>
    <property type="match status" value="1"/>
</dbReference>
<dbReference type="PROSITE" id="PS00184">
    <property type="entry name" value="GARS"/>
    <property type="match status" value="1"/>
</dbReference>
<name>PUR2_METB6</name>
<protein>
    <recommendedName>
        <fullName evidence="2">Phosphoribosylamine--glycine ligase</fullName>
        <ecNumber evidence="2">6.3.4.13</ecNumber>
    </recommendedName>
    <alternativeName>
        <fullName evidence="2">GARS</fullName>
    </alternativeName>
    <alternativeName>
        <fullName evidence="2">Glycinamide ribonucleotide synthetase</fullName>
    </alternativeName>
    <alternativeName>
        <fullName evidence="2">Phosphoribosylglycinamide synthetase</fullName>
    </alternativeName>
</protein>
<organism>
    <name type="scientific">Methanoregula boonei (strain DSM 21154 / JCM 14090 / 6A8)</name>
    <dbReference type="NCBI Taxonomy" id="456442"/>
    <lineage>
        <taxon>Archaea</taxon>
        <taxon>Methanobacteriati</taxon>
        <taxon>Methanobacteriota</taxon>
        <taxon>Stenosarchaea group</taxon>
        <taxon>Methanomicrobia</taxon>
        <taxon>Methanomicrobiales</taxon>
        <taxon>Methanoregulaceae</taxon>
        <taxon>Methanoregula</taxon>
    </lineage>
</organism>